<feature type="chain" id="PRO_1000089994" description="Acetate kinase">
    <location>
        <begin position="1"/>
        <end position="400"/>
    </location>
</feature>
<feature type="active site" description="Proton donor/acceptor" evidence="1">
    <location>
        <position position="146"/>
    </location>
</feature>
<feature type="binding site" evidence="1">
    <location>
        <position position="8"/>
    </location>
    <ligand>
        <name>Mg(2+)</name>
        <dbReference type="ChEBI" id="CHEBI:18420"/>
    </ligand>
</feature>
<feature type="binding site" evidence="1">
    <location>
        <position position="15"/>
    </location>
    <ligand>
        <name>ATP</name>
        <dbReference type="ChEBI" id="CHEBI:30616"/>
    </ligand>
</feature>
<feature type="binding site" evidence="1">
    <location>
        <position position="89"/>
    </location>
    <ligand>
        <name>substrate</name>
    </ligand>
</feature>
<feature type="binding site" evidence="1">
    <location>
        <begin position="206"/>
        <end position="210"/>
    </location>
    <ligand>
        <name>ATP</name>
        <dbReference type="ChEBI" id="CHEBI:30616"/>
    </ligand>
</feature>
<feature type="binding site" evidence="1">
    <location>
        <begin position="283"/>
        <end position="285"/>
    </location>
    <ligand>
        <name>ATP</name>
        <dbReference type="ChEBI" id="CHEBI:30616"/>
    </ligand>
</feature>
<feature type="binding site" evidence="1">
    <location>
        <begin position="331"/>
        <end position="335"/>
    </location>
    <ligand>
        <name>ATP</name>
        <dbReference type="ChEBI" id="CHEBI:30616"/>
    </ligand>
</feature>
<feature type="binding site" evidence="1">
    <location>
        <position position="383"/>
    </location>
    <ligand>
        <name>Mg(2+)</name>
        <dbReference type="ChEBI" id="CHEBI:18420"/>
    </ligand>
</feature>
<feature type="site" description="Transition state stabilizer" evidence="1">
    <location>
        <position position="178"/>
    </location>
</feature>
<feature type="site" description="Transition state stabilizer" evidence="1">
    <location>
        <position position="239"/>
    </location>
</feature>
<name>ACKA_STREM</name>
<comment type="function">
    <text evidence="1">Catalyzes the formation of acetyl phosphate from acetate and ATP. Can also catalyze the reverse reaction.</text>
</comment>
<comment type="catalytic activity">
    <reaction evidence="1">
        <text>acetate + ATP = acetyl phosphate + ADP</text>
        <dbReference type="Rhea" id="RHEA:11352"/>
        <dbReference type="ChEBI" id="CHEBI:22191"/>
        <dbReference type="ChEBI" id="CHEBI:30089"/>
        <dbReference type="ChEBI" id="CHEBI:30616"/>
        <dbReference type="ChEBI" id="CHEBI:456216"/>
        <dbReference type="EC" id="2.7.2.1"/>
    </reaction>
</comment>
<comment type="cofactor">
    <cofactor evidence="1">
        <name>Mg(2+)</name>
        <dbReference type="ChEBI" id="CHEBI:18420"/>
    </cofactor>
    <cofactor evidence="1">
        <name>Mn(2+)</name>
        <dbReference type="ChEBI" id="CHEBI:29035"/>
    </cofactor>
    <text evidence="1">Mg(2+). Can also accept Mn(2+).</text>
</comment>
<comment type="pathway">
    <text evidence="1">Metabolic intermediate biosynthesis; acetyl-CoA biosynthesis; acetyl-CoA from acetate: step 1/2.</text>
</comment>
<comment type="subunit">
    <text evidence="1">Homodimer.</text>
</comment>
<comment type="subcellular location">
    <subcellularLocation>
        <location evidence="1">Cytoplasm</location>
    </subcellularLocation>
</comment>
<comment type="similarity">
    <text evidence="1">Belongs to the acetokinase family.</text>
</comment>
<protein>
    <recommendedName>
        <fullName evidence="1">Acetate kinase</fullName>
        <ecNumber evidence="1">2.7.2.1</ecNumber>
    </recommendedName>
    <alternativeName>
        <fullName evidence="1">Acetokinase</fullName>
    </alternativeName>
</protein>
<reference key="1">
    <citation type="journal article" date="2008" name="PLoS ONE">
        <title>Genome sequence of a lancefield group C Streptococcus zooepidemicus strain causing epidemic nephritis: new information about an old disease.</title>
        <authorList>
            <person name="Beres S.B."/>
            <person name="Sesso R."/>
            <person name="Pinto S.W.L."/>
            <person name="Hoe N.P."/>
            <person name="Porcella S.F."/>
            <person name="Deleo F.R."/>
            <person name="Musser J.M."/>
        </authorList>
    </citation>
    <scope>NUCLEOTIDE SEQUENCE [LARGE SCALE GENOMIC DNA]</scope>
    <source>
        <strain>MGCS10565</strain>
    </source>
</reference>
<keyword id="KW-0067">ATP-binding</keyword>
<keyword id="KW-0963">Cytoplasm</keyword>
<keyword id="KW-0418">Kinase</keyword>
<keyword id="KW-0460">Magnesium</keyword>
<keyword id="KW-0479">Metal-binding</keyword>
<keyword id="KW-0547">Nucleotide-binding</keyword>
<keyword id="KW-0808">Transferase</keyword>
<accession>B4U063</accession>
<organism>
    <name type="scientific">Streptococcus equi subsp. zooepidemicus (strain MGCS10565)</name>
    <dbReference type="NCBI Taxonomy" id="552526"/>
    <lineage>
        <taxon>Bacteria</taxon>
        <taxon>Bacillati</taxon>
        <taxon>Bacillota</taxon>
        <taxon>Bacilli</taxon>
        <taxon>Lactobacillales</taxon>
        <taxon>Streptococcaceae</taxon>
        <taxon>Streptococcus</taxon>
    </lineage>
</organism>
<gene>
    <name evidence="1" type="primary">ackA</name>
    <name type="ordered locus">Sez_0124</name>
</gene>
<sequence length="400" mass="43728">MSKTIAINAGSSSLKWQLYQMPEEKVLAQGIIERIGLTDSISTVKYDGKKEEHILDIPDHTEAVKRLLNDLIHFGIIDTYDEITGVGHRIVAGGEYFKESVVVDDKVVEQVEELAALAPLHNPGAAAGIRAFRKILPDITSVCVFDTSFHTTMQKHTYLYPIPQKYYTDYKVRKYGAHGTSHKYVAEEAAKMLGRPLDELKLITAHVGNGVSITANYHGQSVDTSMGFTPLAGPMMGTRSGDIDPAIIPYLIAQDPELKDAADVVNMLNKQSGLGGVSGISSDMRDIEAGLQANNPDAVLAYNIFIDRIKKFIGQYFAVLNGADALVFTAGMGENAPLMRQDVVNGLSWFGMEIDPEKNVFGYRGDISTAASKVKVLVISTDEELCIARDVERLKKTVSS</sequence>
<proteinExistence type="inferred from homology"/>
<evidence type="ECO:0000255" key="1">
    <source>
        <dbReference type="HAMAP-Rule" id="MF_00020"/>
    </source>
</evidence>
<dbReference type="EC" id="2.7.2.1" evidence="1"/>
<dbReference type="EMBL" id="CP001129">
    <property type="protein sequence ID" value="ACG61506.1"/>
    <property type="molecule type" value="Genomic_DNA"/>
</dbReference>
<dbReference type="RefSeq" id="WP_012514789.1">
    <property type="nucleotide sequence ID" value="NC_011134.1"/>
</dbReference>
<dbReference type="SMR" id="B4U063"/>
<dbReference type="KEGG" id="sez:Sez_0124"/>
<dbReference type="HOGENOM" id="CLU_020352_0_1_9"/>
<dbReference type="UniPathway" id="UPA00340">
    <property type="reaction ID" value="UER00458"/>
</dbReference>
<dbReference type="Proteomes" id="UP000001873">
    <property type="component" value="Chromosome"/>
</dbReference>
<dbReference type="GO" id="GO:0005737">
    <property type="term" value="C:cytoplasm"/>
    <property type="evidence" value="ECO:0007669"/>
    <property type="project" value="UniProtKB-SubCell"/>
</dbReference>
<dbReference type="GO" id="GO:0008776">
    <property type="term" value="F:acetate kinase activity"/>
    <property type="evidence" value="ECO:0007669"/>
    <property type="project" value="UniProtKB-UniRule"/>
</dbReference>
<dbReference type="GO" id="GO:0005524">
    <property type="term" value="F:ATP binding"/>
    <property type="evidence" value="ECO:0007669"/>
    <property type="project" value="UniProtKB-KW"/>
</dbReference>
<dbReference type="GO" id="GO:0000287">
    <property type="term" value="F:magnesium ion binding"/>
    <property type="evidence" value="ECO:0007669"/>
    <property type="project" value="UniProtKB-UniRule"/>
</dbReference>
<dbReference type="GO" id="GO:0006083">
    <property type="term" value="P:acetate metabolic process"/>
    <property type="evidence" value="ECO:0007669"/>
    <property type="project" value="TreeGrafter"/>
</dbReference>
<dbReference type="GO" id="GO:0006085">
    <property type="term" value="P:acetyl-CoA biosynthetic process"/>
    <property type="evidence" value="ECO:0007669"/>
    <property type="project" value="UniProtKB-UniRule"/>
</dbReference>
<dbReference type="CDD" id="cd24010">
    <property type="entry name" value="ASKHA_NBD_AcK_PK"/>
    <property type="match status" value="1"/>
</dbReference>
<dbReference type="Gene3D" id="3.30.420.40">
    <property type="match status" value="2"/>
</dbReference>
<dbReference type="HAMAP" id="MF_00020">
    <property type="entry name" value="Acetate_kinase"/>
    <property type="match status" value="1"/>
</dbReference>
<dbReference type="InterPro" id="IPR004372">
    <property type="entry name" value="Ac/propionate_kinase"/>
</dbReference>
<dbReference type="InterPro" id="IPR000890">
    <property type="entry name" value="Aliphatic_acid_kin_short-chain"/>
</dbReference>
<dbReference type="InterPro" id="IPR023865">
    <property type="entry name" value="Aliphatic_acid_kinase_CS"/>
</dbReference>
<dbReference type="InterPro" id="IPR043129">
    <property type="entry name" value="ATPase_NBD"/>
</dbReference>
<dbReference type="NCBIfam" id="TIGR00016">
    <property type="entry name" value="ackA"/>
    <property type="match status" value="1"/>
</dbReference>
<dbReference type="PANTHER" id="PTHR21060">
    <property type="entry name" value="ACETATE KINASE"/>
    <property type="match status" value="1"/>
</dbReference>
<dbReference type="PANTHER" id="PTHR21060:SF15">
    <property type="entry name" value="ACETATE KINASE-RELATED"/>
    <property type="match status" value="1"/>
</dbReference>
<dbReference type="Pfam" id="PF00871">
    <property type="entry name" value="Acetate_kinase"/>
    <property type="match status" value="1"/>
</dbReference>
<dbReference type="PIRSF" id="PIRSF000722">
    <property type="entry name" value="Acetate_prop_kin"/>
    <property type="match status" value="1"/>
</dbReference>
<dbReference type="PRINTS" id="PR00471">
    <property type="entry name" value="ACETATEKNASE"/>
</dbReference>
<dbReference type="SUPFAM" id="SSF53067">
    <property type="entry name" value="Actin-like ATPase domain"/>
    <property type="match status" value="2"/>
</dbReference>
<dbReference type="PROSITE" id="PS01075">
    <property type="entry name" value="ACETATE_KINASE_1"/>
    <property type="match status" value="1"/>
</dbReference>
<dbReference type="PROSITE" id="PS01076">
    <property type="entry name" value="ACETATE_KINASE_2"/>
    <property type="match status" value="1"/>
</dbReference>